<organism>
    <name type="scientific">Rattus norvegicus</name>
    <name type="common">Rat</name>
    <dbReference type="NCBI Taxonomy" id="10116"/>
    <lineage>
        <taxon>Eukaryota</taxon>
        <taxon>Metazoa</taxon>
        <taxon>Chordata</taxon>
        <taxon>Craniata</taxon>
        <taxon>Vertebrata</taxon>
        <taxon>Euteleostomi</taxon>
        <taxon>Mammalia</taxon>
        <taxon>Eutheria</taxon>
        <taxon>Euarchontoglires</taxon>
        <taxon>Glires</taxon>
        <taxon>Rodentia</taxon>
        <taxon>Myomorpha</taxon>
        <taxon>Muroidea</taxon>
        <taxon>Muridae</taxon>
        <taxon>Murinae</taxon>
        <taxon>Rattus</taxon>
    </lineage>
</organism>
<protein>
    <recommendedName>
        <fullName>Proteasomal ubiquitin receptor ADRM1</fullName>
    </recommendedName>
    <alternativeName>
        <fullName>110 kDa cell membrane glycoprotein</fullName>
        <shortName>Gp110</shortName>
    </alternativeName>
    <alternativeName>
        <fullName>Adhesion-regulating molecule 1</fullName>
        <shortName>ARM-1</shortName>
    </alternativeName>
    <alternativeName>
        <fullName>Rpn13 homolog</fullName>
    </alternativeName>
</protein>
<proteinExistence type="evidence at protein level"/>
<accession>Q9JMB5</accession>
<accession>Q6P795</accession>
<keyword id="KW-0007">Acetylation</keyword>
<keyword id="KW-0963">Cytoplasm</keyword>
<keyword id="KW-1017">Isopeptide bond</keyword>
<keyword id="KW-0539">Nucleus</keyword>
<keyword id="KW-0597">Phosphoprotein</keyword>
<keyword id="KW-0647">Proteasome</keyword>
<keyword id="KW-1185">Reference proteome</keyword>
<keyword id="KW-0832">Ubl conjugation</keyword>
<dbReference type="EMBL" id="AB032742">
    <property type="protein sequence ID" value="BAA92929.1"/>
    <property type="molecule type" value="mRNA"/>
</dbReference>
<dbReference type="EMBL" id="BC061773">
    <property type="protein sequence ID" value="AAH61773.1"/>
    <property type="molecule type" value="mRNA"/>
</dbReference>
<dbReference type="RefSeq" id="NP_113896.1">
    <property type="nucleotide sequence ID" value="NM_031708.1"/>
</dbReference>
<dbReference type="SMR" id="Q9JMB5"/>
<dbReference type="BioGRID" id="249259">
    <property type="interactions" value="3"/>
</dbReference>
<dbReference type="ComplexPortal" id="CPX-8962">
    <property type="entry name" value="19S proteasome regulatory complex"/>
</dbReference>
<dbReference type="ComplexPortal" id="CPX-8965">
    <property type="entry name" value="30S proteasome complex"/>
</dbReference>
<dbReference type="FunCoup" id="Q9JMB5">
    <property type="interactions" value="3083"/>
</dbReference>
<dbReference type="IntAct" id="Q9JMB5">
    <property type="interactions" value="3"/>
</dbReference>
<dbReference type="STRING" id="10116.ENSRNOP00000074216"/>
<dbReference type="GlyGen" id="Q9JMB5">
    <property type="glycosylation" value="2 sites"/>
</dbReference>
<dbReference type="iPTMnet" id="Q9JMB5"/>
<dbReference type="PhosphoSitePlus" id="Q9JMB5"/>
<dbReference type="jPOST" id="Q9JMB5"/>
<dbReference type="PaxDb" id="10116-ENSRNOP00000010087"/>
<dbReference type="GeneID" id="65138"/>
<dbReference type="KEGG" id="rno:65138"/>
<dbReference type="AGR" id="RGD:69248"/>
<dbReference type="CTD" id="11047"/>
<dbReference type="RGD" id="69248">
    <property type="gene designation" value="Adrm1"/>
</dbReference>
<dbReference type="VEuPathDB" id="HostDB:ENSRNOG00000055984"/>
<dbReference type="eggNOG" id="KOG3037">
    <property type="taxonomic scope" value="Eukaryota"/>
</dbReference>
<dbReference type="HOGENOM" id="CLU_041798_2_0_1"/>
<dbReference type="InParanoid" id="Q9JMB5"/>
<dbReference type="OrthoDB" id="84969at9989"/>
<dbReference type="PhylomeDB" id="Q9JMB5"/>
<dbReference type="TreeFam" id="TF313410"/>
<dbReference type="Reactome" id="R-RNO-1169091">
    <property type="pathway name" value="Activation of NF-kappaB in B cells"/>
</dbReference>
<dbReference type="Reactome" id="R-RNO-1234176">
    <property type="pathway name" value="Oxygen-dependent proline hydroxylation of Hypoxia-inducible Factor Alpha"/>
</dbReference>
<dbReference type="Reactome" id="R-RNO-1236978">
    <property type="pathway name" value="Cross-presentation of soluble exogenous antigens (endosomes)"/>
</dbReference>
<dbReference type="Reactome" id="R-RNO-174084">
    <property type="pathway name" value="Autodegradation of Cdh1 by Cdh1:APC/C"/>
</dbReference>
<dbReference type="Reactome" id="R-RNO-174113">
    <property type="pathway name" value="SCF-beta-TrCP mediated degradation of Emi1"/>
</dbReference>
<dbReference type="Reactome" id="R-RNO-174154">
    <property type="pathway name" value="APC/C:Cdc20 mediated degradation of Securin"/>
</dbReference>
<dbReference type="Reactome" id="R-RNO-174178">
    <property type="pathway name" value="APC/C:Cdh1 mediated degradation of Cdc20 and other APC/C:Cdh1 targeted proteins in late mitosis/early G1"/>
</dbReference>
<dbReference type="Reactome" id="R-RNO-174184">
    <property type="pathway name" value="Cdc20:Phospho-APC/C mediated degradation of Cyclin A"/>
</dbReference>
<dbReference type="Reactome" id="R-RNO-187577">
    <property type="pathway name" value="SCF(Skp2)-mediated degradation of p27/p21"/>
</dbReference>
<dbReference type="Reactome" id="R-RNO-195253">
    <property type="pathway name" value="Degradation of beta-catenin by the destruction complex"/>
</dbReference>
<dbReference type="Reactome" id="R-RNO-2467813">
    <property type="pathway name" value="Separation of Sister Chromatids"/>
</dbReference>
<dbReference type="Reactome" id="R-RNO-349425">
    <property type="pathway name" value="Autodegradation of the E3 ubiquitin ligase COP1"/>
</dbReference>
<dbReference type="Reactome" id="R-RNO-350562">
    <property type="pathway name" value="Regulation of ornithine decarboxylase (ODC)"/>
</dbReference>
<dbReference type="Reactome" id="R-RNO-382556">
    <property type="pathway name" value="ABC-family proteins mediated transport"/>
</dbReference>
<dbReference type="Reactome" id="R-RNO-450408">
    <property type="pathway name" value="AUF1 (hnRNP D0) binds and destabilizes mRNA"/>
</dbReference>
<dbReference type="Reactome" id="R-RNO-4608870">
    <property type="pathway name" value="Asymmetric localization of PCP proteins"/>
</dbReference>
<dbReference type="Reactome" id="R-RNO-4641257">
    <property type="pathway name" value="Degradation of AXIN"/>
</dbReference>
<dbReference type="Reactome" id="R-RNO-4641258">
    <property type="pathway name" value="Degradation of DVL"/>
</dbReference>
<dbReference type="Reactome" id="R-RNO-5358346">
    <property type="pathway name" value="Hedgehog ligand biogenesis"/>
</dbReference>
<dbReference type="Reactome" id="R-RNO-5607761">
    <property type="pathway name" value="Dectin-1 mediated noncanonical NF-kB signaling"/>
</dbReference>
<dbReference type="Reactome" id="R-RNO-5610780">
    <property type="pathway name" value="Degradation of GLI1 by the proteasome"/>
</dbReference>
<dbReference type="Reactome" id="R-RNO-5610785">
    <property type="pathway name" value="GLI3 is processed to GLI3R by the proteasome"/>
</dbReference>
<dbReference type="Reactome" id="R-RNO-5632684">
    <property type="pathway name" value="Hedgehog 'on' state"/>
</dbReference>
<dbReference type="Reactome" id="R-RNO-5658442">
    <property type="pathway name" value="Regulation of RAS by GAPs"/>
</dbReference>
<dbReference type="Reactome" id="R-RNO-5668541">
    <property type="pathway name" value="TNFR2 non-canonical NF-kB pathway"/>
</dbReference>
<dbReference type="Reactome" id="R-RNO-5676590">
    <property type="pathway name" value="NIK--&gt;noncanonical NF-kB signaling"/>
</dbReference>
<dbReference type="Reactome" id="R-RNO-5687128">
    <property type="pathway name" value="MAPK6/MAPK4 signaling"/>
</dbReference>
<dbReference type="Reactome" id="R-RNO-5689603">
    <property type="pathway name" value="UCH proteinases"/>
</dbReference>
<dbReference type="Reactome" id="R-RNO-5689880">
    <property type="pathway name" value="Ub-specific processing proteases"/>
</dbReference>
<dbReference type="Reactome" id="R-RNO-68867">
    <property type="pathway name" value="Assembly of the pre-replicative complex"/>
</dbReference>
<dbReference type="Reactome" id="R-RNO-68949">
    <property type="pathway name" value="Orc1 removal from chromatin"/>
</dbReference>
<dbReference type="Reactome" id="R-RNO-69017">
    <property type="pathway name" value="CDK-mediated phosphorylation and removal of Cdc6"/>
</dbReference>
<dbReference type="Reactome" id="R-RNO-69481">
    <property type="pathway name" value="G2/M Checkpoints"/>
</dbReference>
<dbReference type="Reactome" id="R-RNO-69601">
    <property type="pathway name" value="Ubiquitin Mediated Degradation of Phosphorylated Cdc25A"/>
</dbReference>
<dbReference type="Reactome" id="R-RNO-75815">
    <property type="pathway name" value="Ubiquitin-dependent degradation of Cyclin D"/>
</dbReference>
<dbReference type="Reactome" id="R-RNO-8852276">
    <property type="pathway name" value="The role of GTSE1 in G2/M progression after G2 checkpoint"/>
</dbReference>
<dbReference type="Reactome" id="R-RNO-8854050">
    <property type="pathway name" value="FBXL7 down-regulates AURKA during mitotic entry and in early mitosis"/>
</dbReference>
<dbReference type="Reactome" id="R-RNO-8939236">
    <property type="pathway name" value="RUNX1 regulates transcription of genes involved in differentiation of HSCs"/>
</dbReference>
<dbReference type="Reactome" id="R-RNO-8941858">
    <property type="pathway name" value="Regulation of RUNX3 expression and activity"/>
</dbReference>
<dbReference type="Reactome" id="R-RNO-8948751">
    <property type="pathway name" value="Regulation of PTEN stability and activity"/>
</dbReference>
<dbReference type="Reactome" id="R-RNO-8951664">
    <property type="pathway name" value="Neddylation"/>
</dbReference>
<dbReference type="Reactome" id="R-RNO-9755511">
    <property type="pathway name" value="KEAP1-NFE2L2 pathway"/>
</dbReference>
<dbReference type="Reactome" id="R-RNO-9762114">
    <property type="pathway name" value="GSK3B and BTRC:CUL1-mediated-degradation of NFE2L2"/>
</dbReference>
<dbReference type="Reactome" id="R-RNO-983168">
    <property type="pathway name" value="Antigen processing: Ubiquitination &amp; Proteasome degradation"/>
</dbReference>
<dbReference type="Reactome" id="R-RNO-9907900">
    <property type="pathway name" value="Proteasome assembly"/>
</dbReference>
<dbReference type="PRO" id="PR:Q9JMB5"/>
<dbReference type="Proteomes" id="UP000002494">
    <property type="component" value="Chromosome 3"/>
</dbReference>
<dbReference type="Bgee" id="ENSRNOG00000055984">
    <property type="expression patterns" value="Expressed in skeletal muscle tissue and 19 other cell types or tissues"/>
</dbReference>
<dbReference type="GO" id="GO:0005737">
    <property type="term" value="C:cytoplasm"/>
    <property type="evidence" value="ECO:0007669"/>
    <property type="project" value="UniProtKB-SubCell"/>
</dbReference>
<dbReference type="GO" id="GO:0005634">
    <property type="term" value="C:nucleus"/>
    <property type="evidence" value="ECO:0007669"/>
    <property type="project" value="UniProtKB-SubCell"/>
</dbReference>
<dbReference type="GO" id="GO:0000502">
    <property type="term" value="C:proteasome complex"/>
    <property type="evidence" value="ECO:0000250"/>
    <property type="project" value="UniProtKB"/>
</dbReference>
<dbReference type="GO" id="GO:0008541">
    <property type="term" value="C:proteasome regulatory particle, lid subcomplex"/>
    <property type="evidence" value="ECO:0000318"/>
    <property type="project" value="GO_Central"/>
</dbReference>
<dbReference type="GO" id="GO:0061133">
    <property type="term" value="F:endopeptidase activator activity"/>
    <property type="evidence" value="ECO:0000250"/>
    <property type="project" value="UniProtKB"/>
</dbReference>
<dbReference type="GO" id="GO:0140678">
    <property type="term" value="F:molecular function inhibitor activity"/>
    <property type="evidence" value="ECO:0000266"/>
    <property type="project" value="RGD"/>
</dbReference>
<dbReference type="GO" id="GO:0002020">
    <property type="term" value="F:protease binding"/>
    <property type="evidence" value="ECO:0000266"/>
    <property type="project" value="RGD"/>
</dbReference>
<dbReference type="GO" id="GO:0070628">
    <property type="term" value="F:proteasome binding"/>
    <property type="evidence" value="ECO:0000266"/>
    <property type="project" value="RGD"/>
</dbReference>
<dbReference type="GO" id="GO:0060612">
    <property type="term" value="P:adipose tissue development"/>
    <property type="evidence" value="ECO:0000266"/>
    <property type="project" value="RGD"/>
</dbReference>
<dbReference type="GO" id="GO:0042699">
    <property type="term" value="P:follicle-stimulating hormone signaling pathway"/>
    <property type="evidence" value="ECO:0000266"/>
    <property type="project" value="RGD"/>
</dbReference>
<dbReference type="GO" id="GO:0048477">
    <property type="term" value="P:oogenesis"/>
    <property type="evidence" value="ECO:0000266"/>
    <property type="project" value="RGD"/>
</dbReference>
<dbReference type="GO" id="GO:0001541">
    <property type="term" value="P:ovarian follicle development"/>
    <property type="evidence" value="ECO:0000266"/>
    <property type="project" value="RGD"/>
</dbReference>
<dbReference type="GO" id="GO:0060399">
    <property type="term" value="P:positive regulation of growth hormone receptor signaling pathway"/>
    <property type="evidence" value="ECO:0000266"/>
    <property type="project" value="RGD"/>
</dbReference>
<dbReference type="GO" id="GO:0043248">
    <property type="term" value="P:proteasome assembly"/>
    <property type="evidence" value="ECO:0000250"/>
    <property type="project" value="UniProtKB"/>
</dbReference>
<dbReference type="GO" id="GO:0033081">
    <property type="term" value="P:regulation of T cell differentiation in thymus"/>
    <property type="evidence" value="ECO:0000266"/>
    <property type="project" value="RGD"/>
</dbReference>
<dbReference type="GO" id="GO:0072520">
    <property type="term" value="P:seminiferous tubule development"/>
    <property type="evidence" value="ECO:0000266"/>
    <property type="project" value="RGD"/>
</dbReference>
<dbReference type="GO" id="GO:0060009">
    <property type="term" value="P:Sertoli cell development"/>
    <property type="evidence" value="ECO:0000266"/>
    <property type="project" value="RGD"/>
</dbReference>
<dbReference type="GO" id="GO:0007286">
    <property type="term" value="P:spermatid development"/>
    <property type="evidence" value="ECO:0000266"/>
    <property type="project" value="RGD"/>
</dbReference>
<dbReference type="GO" id="GO:0048538">
    <property type="term" value="P:thymus development"/>
    <property type="evidence" value="ECO:0000266"/>
    <property type="project" value="RGD"/>
</dbReference>
<dbReference type="GO" id="GO:0006368">
    <property type="term" value="P:transcription elongation by RNA polymerase II"/>
    <property type="evidence" value="ECO:0000266"/>
    <property type="project" value="RGD"/>
</dbReference>
<dbReference type="CDD" id="cd13314">
    <property type="entry name" value="PH_Rpn13"/>
    <property type="match status" value="1"/>
</dbReference>
<dbReference type="FunFam" id="1.10.2020.20:FF:000001">
    <property type="entry name" value="Proteasomal ubiquitin receptor ADRM1"/>
    <property type="match status" value="1"/>
</dbReference>
<dbReference type="FunFam" id="2.30.29.70:FF:000001">
    <property type="entry name" value="Proteasomal ubiquitin receptor ADRM1"/>
    <property type="match status" value="1"/>
</dbReference>
<dbReference type="Gene3D" id="1.10.2020.20">
    <property type="match status" value="1"/>
</dbReference>
<dbReference type="Gene3D" id="2.30.29.70">
    <property type="entry name" value="Proteasomal ubiquitin receptor Rpn13/ADRM1"/>
    <property type="match status" value="1"/>
</dbReference>
<dbReference type="InterPro" id="IPR044867">
    <property type="entry name" value="DEUBAD_dom"/>
</dbReference>
<dbReference type="InterPro" id="IPR006773">
    <property type="entry name" value="Rpn13/ADRM1"/>
</dbReference>
<dbReference type="InterPro" id="IPR044868">
    <property type="entry name" value="Rpn13/ADRM1_Pru"/>
</dbReference>
<dbReference type="InterPro" id="IPR038633">
    <property type="entry name" value="Rpn13/ADRM1_Pru_sf"/>
</dbReference>
<dbReference type="InterPro" id="IPR032368">
    <property type="entry name" value="RPN13_DEUBAD"/>
</dbReference>
<dbReference type="InterPro" id="IPR038108">
    <property type="entry name" value="RPN13_DEUBAD_sf"/>
</dbReference>
<dbReference type="PANTHER" id="PTHR12225">
    <property type="entry name" value="ADHESION REGULATING MOLECULE 1 110 KDA CELL MEMBRANE GLYCOPROTEIN"/>
    <property type="match status" value="1"/>
</dbReference>
<dbReference type="PANTHER" id="PTHR12225:SF0">
    <property type="entry name" value="PROTEASOMAL UBIQUITIN RECEPTOR ADRM1"/>
    <property type="match status" value="1"/>
</dbReference>
<dbReference type="Pfam" id="PF04683">
    <property type="entry name" value="Rpn13_ADRM1_Pru"/>
    <property type="match status" value="1"/>
</dbReference>
<dbReference type="Pfam" id="PF16550">
    <property type="entry name" value="RPN13_C"/>
    <property type="match status" value="1"/>
</dbReference>
<dbReference type="PROSITE" id="PS51916">
    <property type="entry name" value="DEUBAD"/>
    <property type="match status" value="1"/>
</dbReference>
<dbReference type="PROSITE" id="PS51917">
    <property type="entry name" value="PRU"/>
    <property type="match status" value="1"/>
</dbReference>
<evidence type="ECO:0000250" key="1"/>
<evidence type="ECO:0000250" key="2">
    <source>
        <dbReference type="UniProtKB" id="Q16186"/>
    </source>
</evidence>
<evidence type="ECO:0000255" key="3">
    <source>
        <dbReference type="PROSITE-ProRule" id="PRU01264"/>
    </source>
</evidence>
<evidence type="ECO:0000255" key="4">
    <source>
        <dbReference type="PROSITE-ProRule" id="PRU01265"/>
    </source>
</evidence>
<evidence type="ECO:0000256" key="5">
    <source>
        <dbReference type="SAM" id="MobiDB-lite"/>
    </source>
</evidence>
<evidence type="ECO:0000305" key="6"/>
<evidence type="ECO:0007744" key="7">
    <source>
    </source>
</evidence>
<comment type="function">
    <text evidence="2">Component of the 26S proteasome, a multiprotein complex involved in the ATP-dependent degradation of ubiquitinated proteins. This complex plays a key role in the maintenance of protein homeostasis by removing misfolded or damaged proteins, which could impair cellular functions, and by removing proteins whose functions are no longer required. Therefore, the proteasome participates in numerous cellular processes, including cell cycle progression, apoptosis, or DNA damage repair. Within the complex, functions as a proteasomal ubiquitin receptor. Engages and activates 19S-associated deubiquitinases UCHL5 and PSMD14 during protein degradation. UCHL5 reversibly associate with the 19S regulatory particle whereas PSMD14 is an intrinsic subunit of the proteasome lid subcomplex.</text>
</comment>
<comment type="subunit">
    <text evidence="2">Component of the 19S proteasome regulatory particle complex. The 26S proteasome consists of a 20S core particle (CP) and two 19S regulatory subunits (RP). Interacts with the proteasomal scaffolding protein PSMD1. Interacts with deubiquitinase UCHL5; this interaction activates the auto-inhibited UCHL5 by deoligomerizing it. Interacts with UBQLN2 and ubiquitin.</text>
</comment>
<comment type="subcellular location">
    <subcellularLocation>
        <location evidence="2">Cytoplasm</location>
    </subcellularLocation>
    <subcellularLocation>
        <location evidence="2">Nucleus</location>
    </subcellularLocation>
</comment>
<comment type="tissue specificity">
    <text>Widely expressed.</text>
</comment>
<comment type="domain">
    <text evidence="2">The Pru (pleckstrin-like receptor for ubiquitin) domain mediates interactions with PSMD1 and ubiquitin. Preferential binding to the proximal subunit of 'Lys-48'-linked diubiquitin allows UCHL5 access to the distal subunit.</text>
</comment>
<comment type="PTM">
    <text evidence="2">Ubiquitinated by UBE3C in response to proteotoxic stress.</text>
</comment>
<comment type="similarity">
    <text evidence="6">Belongs to the ADRM1 family.</text>
</comment>
<comment type="caution">
    <text evidence="6">Although initially described as a cell membrane glycoprotein, ADRM1 is intracellular and non-glycosylated, and has probably no direct role in cell adhesion.</text>
</comment>
<feature type="initiator methionine" description="Removed" evidence="2">
    <location>
        <position position="1"/>
    </location>
</feature>
<feature type="chain" id="PRO_0000020633" description="Proteasomal ubiquitin receptor ADRM1">
    <location>
        <begin position="2"/>
        <end position="407"/>
    </location>
</feature>
<feature type="domain" description="Pru" evidence="4">
    <location>
        <begin position="18"/>
        <end position="131"/>
    </location>
</feature>
<feature type="domain" description="DEUBAD" evidence="3">
    <location>
        <begin position="277"/>
        <end position="391"/>
    </location>
</feature>
<feature type="region of interest" description="Disordered" evidence="5">
    <location>
        <begin position="130"/>
        <end position="150"/>
    </location>
</feature>
<feature type="region of interest" description="Disordered" evidence="5">
    <location>
        <begin position="196"/>
        <end position="259"/>
    </location>
</feature>
<feature type="region of interest" description="Interaction with UCHL5" evidence="1">
    <location>
        <begin position="362"/>
        <end position="407"/>
    </location>
</feature>
<feature type="region of interest" description="Disordered" evidence="5">
    <location>
        <begin position="381"/>
        <end position="407"/>
    </location>
</feature>
<feature type="compositionally biased region" description="Low complexity" evidence="5">
    <location>
        <begin position="137"/>
        <end position="150"/>
    </location>
</feature>
<feature type="compositionally biased region" description="Low complexity" evidence="5">
    <location>
        <begin position="196"/>
        <end position="248"/>
    </location>
</feature>
<feature type="compositionally biased region" description="Polar residues" evidence="5">
    <location>
        <begin position="249"/>
        <end position="259"/>
    </location>
</feature>
<feature type="compositionally biased region" description="Basic and acidic residues" evidence="5">
    <location>
        <begin position="387"/>
        <end position="398"/>
    </location>
</feature>
<feature type="modified residue" description="N-acetylthreonine" evidence="2">
    <location>
        <position position="2"/>
    </location>
</feature>
<feature type="modified residue" description="Phosphoserine" evidence="2">
    <location>
        <position position="15"/>
    </location>
</feature>
<feature type="modified residue" description="Phosphoserine" evidence="2">
    <location>
        <position position="140"/>
    </location>
</feature>
<feature type="modified residue" description="Phosphoserine" evidence="2">
    <location>
        <position position="211"/>
    </location>
</feature>
<feature type="modified residue" description="Phosphothreonine" evidence="2">
    <location>
        <position position="217"/>
    </location>
</feature>
<feature type="modified residue" description="Phosphoserine" evidence="7">
    <location>
        <position position="405"/>
    </location>
</feature>
<feature type="cross-link" description="Glycyl lysine isopeptide (Lys-Gly) (interchain with G-Cter in ubiquitin)" evidence="2">
    <location>
        <position position="34"/>
    </location>
</feature>
<feature type="sequence conflict" description="In Ref. 1; BAA92929." evidence="6" ref="1">
    <original>T</original>
    <variation>I</variation>
    <location>
        <position position="20"/>
    </location>
</feature>
<sequence length="407" mass="42102">MTTSGALFPSLVPGSRGSSTKYLVEFRAGKMSLKGTTVTPDKRKGLVYIQQTDDSLIHFCWKDRTSGTVEDDLIIFPDDCEFKRVPQCPSGRVYVLKFKAGSKRLFFWMQEPKTDQDEEHCRKVNECLNNPPMPGTLGASGSSGHELSALGGEGGLQSLLGNMSHSQLMQLIGPAGLGGLGGLGALTGPGLASLLGSSGPPASSSSSSSRSQSAAVTPSSTTSSARATPAPSAPAAASATSPSPAPSSGNGTSTAASPTQPIQLSDLQSILATMNVPAGPGGSQQVDLASVLTPEIMAPILANADVQERLLPYLPSGESLPQTAEEIQNTLTSPQFQQALGMFSAALASGQLGPLMCQFGLPAEAVEAANKGDVEAFAKAMQNNAKSDPKEGDTKDKKDEEEDMSLD</sequence>
<reference key="1">
    <citation type="journal article" date="2000" name="Biochim. Biophys. Acta">
        <title>Rat homologue of the human Mr 110000 antigen is the protein that expresses widely in various tissues.</title>
        <authorList>
            <person name="Nakane T."/>
            <person name="Inada Y."/>
            <person name="Itoh F."/>
            <person name="Chiba S."/>
        </authorList>
    </citation>
    <scope>NUCLEOTIDE SEQUENCE [MRNA]</scope>
    <source>
        <tissue>Lung</tissue>
    </source>
</reference>
<reference key="2">
    <citation type="journal article" date="2004" name="Genome Res.">
        <title>The status, quality, and expansion of the NIH full-length cDNA project: the Mammalian Gene Collection (MGC).</title>
        <authorList>
            <consortium name="The MGC Project Team"/>
        </authorList>
    </citation>
    <scope>NUCLEOTIDE SEQUENCE [LARGE SCALE MRNA]</scope>
    <source>
        <tissue>Prostate</tissue>
    </source>
</reference>
<reference key="3">
    <citation type="journal article" date="2012" name="Nat. Commun.">
        <title>Quantitative maps of protein phosphorylation sites across 14 different rat organs and tissues.</title>
        <authorList>
            <person name="Lundby A."/>
            <person name="Secher A."/>
            <person name="Lage K."/>
            <person name="Nordsborg N.B."/>
            <person name="Dmytriyev A."/>
            <person name="Lundby C."/>
            <person name="Olsen J.V."/>
        </authorList>
    </citation>
    <scope>PHOSPHORYLATION [LARGE SCALE ANALYSIS] AT SER-405</scope>
    <scope>IDENTIFICATION BY MASS SPECTROMETRY [LARGE SCALE ANALYSIS]</scope>
</reference>
<gene>
    <name type="primary">Adrm1</name>
    <name type="synonym">Gp110</name>
</gene>
<name>ADRM1_RAT</name>